<name>MFD_STAA3</name>
<protein>
    <recommendedName>
        <fullName evidence="1">Transcription-repair-coupling factor</fullName>
        <shortName evidence="1">TRCF</shortName>
        <ecNumber evidence="1">3.6.4.-</ecNumber>
    </recommendedName>
</protein>
<dbReference type="EC" id="3.6.4.-" evidence="1"/>
<dbReference type="EMBL" id="CP000255">
    <property type="protein sequence ID" value="ABD21284.1"/>
    <property type="molecule type" value="Genomic_DNA"/>
</dbReference>
<dbReference type="RefSeq" id="WP_000154228.1">
    <property type="nucleotide sequence ID" value="NZ_CP027476.1"/>
</dbReference>
<dbReference type="SMR" id="Q2FJD8"/>
<dbReference type="KEGG" id="saa:SAUSA300_0481"/>
<dbReference type="HOGENOM" id="CLU_005122_1_3_9"/>
<dbReference type="OMA" id="WAPPCRE"/>
<dbReference type="Proteomes" id="UP000001939">
    <property type="component" value="Chromosome"/>
</dbReference>
<dbReference type="GO" id="GO:0005737">
    <property type="term" value="C:cytoplasm"/>
    <property type="evidence" value="ECO:0007669"/>
    <property type="project" value="UniProtKB-SubCell"/>
</dbReference>
<dbReference type="GO" id="GO:0005524">
    <property type="term" value="F:ATP binding"/>
    <property type="evidence" value="ECO:0007669"/>
    <property type="project" value="UniProtKB-UniRule"/>
</dbReference>
<dbReference type="GO" id="GO:0003684">
    <property type="term" value="F:damaged DNA binding"/>
    <property type="evidence" value="ECO:0007669"/>
    <property type="project" value="InterPro"/>
</dbReference>
<dbReference type="GO" id="GO:0003678">
    <property type="term" value="F:DNA helicase activity"/>
    <property type="evidence" value="ECO:0007669"/>
    <property type="project" value="TreeGrafter"/>
</dbReference>
<dbReference type="GO" id="GO:0016787">
    <property type="term" value="F:hydrolase activity"/>
    <property type="evidence" value="ECO:0007669"/>
    <property type="project" value="UniProtKB-KW"/>
</dbReference>
<dbReference type="GO" id="GO:0006355">
    <property type="term" value="P:regulation of DNA-templated transcription"/>
    <property type="evidence" value="ECO:0007669"/>
    <property type="project" value="UniProtKB-UniRule"/>
</dbReference>
<dbReference type="GO" id="GO:0000716">
    <property type="term" value="P:transcription-coupled nucleotide-excision repair, DNA damage recognition"/>
    <property type="evidence" value="ECO:0007669"/>
    <property type="project" value="UniProtKB-UniRule"/>
</dbReference>
<dbReference type="CDD" id="cd17991">
    <property type="entry name" value="DEXHc_TRCF"/>
    <property type="match status" value="1"/>
</dbReference>
<dbReference type="FunFam" id="3.40.50.300:FF:000546">
    <property type="entry name" value="Transcription-repair-coupling factor"/>
    <property type="match status" value="1"/>
</dbReference>
<dbReference type="Gene3D" id="2.40.10.170">
    <property type="match status" value="1"/>
</dbReference>
<dbReference type="Gene3D" id="3.40.50.11140">
    <property type="match status" value="1"/>
</dbReference>
<dbReference type="Gene3D" id="3.40.50.11180">
    <property type="match status" value="1"/>
</dbReference>
<dbReference type="Gene3D" id="3.40.50.300">
    <property type="entry name" value="P-loop containing nucleotide triphosphate hydrolases"/>
    <property type="match status" value="2"/>
</dbReference>
<dbReference type="Gene3D" id="3.30.2060.10">
    <property type="entry name" value="Penicillin-binding protein 1b domain"/>
    <property type="match status" value="1"/>
</dbReference>
<dbReference type="Gene3D" id="3.90.1150.50">
    <property type="entry name" value="Transcription-repair-coupling factor, D7 domain"/>
    <property type="match status" value="1"/>
</dbReference>
<dbReference type="HAMAP" id="MF_00969">
    <property type="entry name" value="TRCF"/>
    <property type="match status" value="1"/>
</dbReference>
<dbReference type="InterPro" id="IPR003711">
    <property type="entry name" value="CarD-like/TRCF_RID"/>
</dbReference>
<dbReference type="InterPro" id="IPR036101">
    <property type="entry name" value="CarD-like/TRCF_RID_sf"/>
</dbReference>
<dbReference type="InterPro" id="IPR011545">
    <property type="entry name" value="DEAD/DEAH_box_helicase_dom"/>
</dbReference>
<dbReference type="InterPro" id="IPR014001">
    <property type="entry name" value="Helicase_ATP-bd"/>
</dbReference>
<dbReference type="InterPro" id="IPR001650">
    <property type="entry name" value="Helicase_C-like"/>
</dbReference>
<dbReference type="InterPro" id="IPR004576">
    <property type="entry name" value="Mfd"/>
</dbReference>
<dbReference type="InterPro" id="IPR048635">
    <property type="entry name" value="MFD_D3"/>
</dbReference>
<dbReference type="InterPro" id="IPR027417">
    <property type="entry name" value="P-loop_NTPase"/>
</dbReference>
<dbReference type="InterPro" id="IPR047112">
    <property type="entry name" value="RecG/Mfd"/>
</dbReference>
<dbReference type="InterPro" id="IPR037235">
    <property type="entry name" value="TRCF-like_C_D7"/>
</dbReference>
<dbReference type="InterPro" id="IPR005118">
    <property type="entry name" value="TRCF_C"/>
</dbReference>
<dbReference type="InterPro" id="IPR041471">
    <property type="entry name" value="UvrB_inter"/>
</dbReference>
<dbReference type="NCBIfam" id="TIGR00580">
    <property type="entry name" value="mfd"/>
    <property type="match status" value="1"/>
</dbReference>
<dbReference type="PANTHER" id="PTHR47964">
    <property type="entry name" value="ATP-DEPENDENT DNA HELICASE HOMOLOG RECG, CHLOROPLASTIC"/>
    <property type="match status" value="1"/>
</dbReference>
<dbReference type="PANTHER" id="PTHR47964:SF1">
    <property type="entry name" value="ATP-DEPENDENT DNA HELICASE HOMOLOG RECG, CHLOROPLASTIC"/>
    <property type="match status" value="1"/>
</dbReference>
<dbReference type="Pfam" id="PF02559">
    <property type="entry name" value="CarD_TRCF_RID"/>
    <property type="match status" value="1"/>
</dbReference>
<dbReference type="Pfam" id="PF00270">
    <property type="entry name" value="DEAD"/>
    <property type="match status" value="1"/>
</dbReference>
<dbReference type="Pfam" id="PF00271">
    <property type="entry name" value="Helicase_C"/>
    <property type="match status" value="1"/>
</dbReference>
<dbReference type="Pfam" id="PF21132">
    <property type="entry name" value="MFD_D3"/>
    <property type="match status" value="1"/>
</dbReference>
<dbReference type="Pfam" id="PF03461">
    <property type="entry name" value="TRCF"/>
    <property type="match status" value="1"/>
</dbReference>
<dbReference type="Pfam" id="PF17757">
    <property type="entry name" value="UvrB_inter"/>
    <property type="match status" value="1"/>
</dbReference>
<dbReference type="SMART" id="SM01058">
    <property type="entry name" value="CarD_TRCF"/>
    <property type="match status" value="1"/>
</dbReference>
<dbReference type="SMART" id="SM00487">
    <property type="entry name" value="DEXDc"/>
    <property type="match status" value="1"/>
</dbReference>
<dbReference type="SMART" id="SM00490">
    <property type="entry name" value="HELICc"/>
    <property type="match status" value="1"/>
</dbReference>
<dbReference type="SMART" id="SM00982">
    <property type="entry name" value="TRCF"/>
    <property type="match status" value="1"/>
</dbReference>
<dbReference type="SUPFAM" id="SSF141259">
    <property type="entry name" value="CarD-like"/>
    <property type="match status" value="1"/>
</dbReference>
<dbReference type="SUPFAM" id="SSF52540">
    <property type="entry name" value="P-loop containing nucleoside triphosphate hydrolases"/>
    <property type="match status" value="4"/>
</dbReference>
<dbReference type="SUPFAM" id="SSF143517">
    <property type="entry name" value="TRCF domain-like"/>
    <property type="match status" value="1"/>
</dbReference>
<dbReference type="PROSITE" id="PS51192">
    <property type="entry name" value="HELICASE_ATP_BIND_1"/>
    <property type="match status" value="1"/>
</dbReference>
<dbReference type="PROSITE" id="PS51194">
    <property type="entry name" value="HELICASE_CTER"/>
    <property type="match status" value="1"/>
</dbReference>
<accession>Q2FJD8</accession>
<organism>
    <name type="scientific">Staphylococcus aureus (strain USA300)</name>
    <dbReference type="NCBI Taxonomy" id="367830"/>
    <lineage>
        <taxon>Bacteria</taxon>
        <taxon>Bacillati</taxon>
        <taxon>Bacillota</taxon>
        <taxon>Bacilli</taxon>
        <taxon>Bacillales</taxon>
        <taxon>Staphylococcaceae</taxon>
        <taxon>Staphylococcus</taxon>
    </lineage>
</organism>
<gene>
    <name evidence="1" type="primary">mfd</name>
    <name type="ordered locus">SAUSA300_0481</name>
</gene>
<keyword id="KW-0067">ATP-binding</keyword>
<keyword id="KW-0963">Cytoplasm</keyword>
<keyword id="KW-0227">DNA damage</keyword>
<keyword id="KW-0234">DNA repair</keyword>
<keyword id="KW-0238">DNA-binding</keyword>
<keyword id="KW-0347">Helicase</keyword>
<keyword id="KW-0378">Hydrolase</keyword>
<keyword id="KW-0547">Nucleotide-binding</keyword>
<feature type="chain" id="PRO_0000282675" description="Transcription-repair-coupling factor">
    <location>
        <begin position="1"/>
        <end position="1168"/>
    </location>
</feature>
<feature type="domain" description="Helicase ATP-binding" evidence="1">
    <location>
        <begin position="633"/>
        <end position="794"/>
    </location>
</feature>
<feature type="domain" description="Helicase C-terminal" evidence="1">
    <location>
        <begin position="808"/>
        <end position="969"/>
    </location>
</feature>
<feature type="short sequence motif" description="DEEQ box">
    <location>
        <begin position="747"/>
        <end position="750"/>
    </location>
</feature>
<feature type="binding site" evidence="1">
    <location>
        <begin position="646"/>
        <end position="653"/>
    </location>
    <ligand>
        <name>ATP</name>
        <dbReference type="ChEBI" id="CHEBI:30616"/>
    </ligand>
</feature>
<sequence length="1168" mass="134219">MTILTTLIKEDNHFQDLNQVFGQANTLVTGLSPSAKVTMIAEKYAQSNQQLLLITNNLYQADKLETDLLQFIDAEELYKYPVQDIMTEEFSTQSPQLMSERIRTLTALAQGKKGLFIVPLNGLKKWLTPVEMWQNHQMTLRVGEDIDVDQFLNKLVNMGYKRESVVSHIGEFSLRGGIIDIFPLIGEPIRIELFDTEIDSIRDFDVETQRSKDNVEEVDITTASDYIITEEVISHLKEELKTAYENTRPKIDKSVRNDLKETYESFKLFESTYFDHQILRRLVAFMYETPSTIIEYFQKDAIIAVDEFNRIKETEESLTVESDSFISNIIESGNGFIGQSFIKYDDFETLIEGYPVTYFSLFATTMPIKLNHIIKFSCKPVQQFYGQYDIMRSEFQRYVNQNYHIVVLVETETKVERMQAMLSEMHIPSITKLHRSMSSGQAVIIEGSLSEGFELPDMGLVVITERELFKSKQKKQRKRTKAISNAEKIKSYQDLNVGDYIVHVHHGVGRYLGVETLEVGQTHRDYIKLQYKGTDQLFVPVDQMDQVQKYVASEDKTPKLNKLGGSEWKKTKAKVQQSVEDIAEELIDLYKEREMAEGYQYGEDTAEQTTFELDFPYELTPDQAKSIDEIKDDMQKSRPMDRLLCGDVGYGKTEVAVRAAFKAVMEGKQVAFLVPTTILAQQHYETLIERMQDFPVEIQLMSRFRTPKEIKQTKEGLKTGFVDIVVGTHKLLSKDIQYKDLGLLIVDEEQRFGVRHKERIKTLKHNVDVLTLTATPIPRTLHMSMLGVRDLSVIETPPENRFPVQTYVLEQNMSFIKEALERELSRDGQVFYLYNKVQSIYEKREQLQMLMPDANIAVAHGQMTERDLEETMLSFINNEYDILVTTTIIETGVDVPNANTLIIEDADRFGLSQLYQLRGRVGRSSRIGYAYFLHPANKVLTETAEDRLQAIKEFTELGSGFKIAMRDLNIRGAGNLLGKQQHGFIDTVGFDLYSQMLEEAVNEKRGIKEPESEVPEVEVDLNLDAYLPTEYIANEQAKIEIYKKLRKTETFDQIIDIKDELIDRFNDYPVEVARLLDIVEIKVHALHSGITLIKDKGKIIDIHLSVKATENIDGEVLFKATQPLGRTMKVGVQNNAMTITLTKQNQWLDSLKFLVKCIEESMRISDEA</sequence>
<comment type="function">
    <text evidence="1">Couples transcription and DNA repair by recognizing RNA polymerase (RNAP) stalled at DNA lesions. Mediates ATP-dependent release of RNAP and its truncated transcript from the DNA, and recruitment of nucleotide excision repair machinery to the damaged site.</text>
</comment>
<comment type="subcellular location">
    <subcellularLocation>
        <location evidence="1">Cytoplasm</location>
    </subcellularLocation>
</comment>
<comment type="similarity">
    <text evidence="1">In the N-terminal section; belongs to the UvrB family.</text>
</comment>
<comment type="similarity">
    <text evidence="1">In the C-terminal section; belongs to the helicase family. RecG subfamily.</text>
</comment>
<proteinExistence type="inferred from homology"/>
<evidence type="ECO:0000255" key="1">
    <source>
        <dbReference type="HAMAP-Rule" id="MF_00969"/>
    </source>
</evidence>
<reference key="1">
    <citation type="journal article" date="2006" name="Lancet">
        <title>Complete genome sequence of USA300, an epidemic clone of community-acquired meticillin-resistant Staphylococcus aureus.</title>
        <authorList>
            <person name="Diep B.A."/>
            <person name="Gill S.R."/>
            <person name="Chang R.F."/>
            <person name="Phan T.H."/>
            <person name="Chen J.H."/>
            <person name="Davidson M.G."/>
            <person name="Lin F."/>
            <person name="Lin J."/>
            <person name="Carleton H.A."/>
            <person name="Mongodin E.F."/>
            <person name="Sensabaugh G.F."/>
            <person name="Perdreau-Remington F."/>
        </authorList>
    </citation>
    <scope>NUCLEOTIDE SEQUENCE [LARGE SCALE GENOMIC DNA]</scope>
    <source>
        <strain>USA300</strain>
    </source>
</reference>